<proteinExistence type="inferred from homology"/>
<evidence type="ECO:0000255" key="1">
    <source>
        <dbReference type="HAMAP-Rule" id="MF_00531"/>
    </source>
</evidence>
<evidence type="ECO:0000256" key="2">
    <source>
        <dbReference type="SAM" id="MobiDB-lite"/>
    </source>
</evidence>
<evidence type="ECO:0000305" key="3"/>
<reference key="1">
    <citation type="journal article" date="2007" name="Nat. Biotechnol.">
        <title>Complete genome sequence of the fish pathogen Flavobacterium psychrophilum.</title>
        <authorList>
            <person name="Duchaud E."/>
            <person name="Boussaha M."/>
            <person name="Loux V."/>
            <person name="Bernardet J.-F."/>
            <person name="Michel C."/>
            <person name="Kerouault B."/>
            <person name="Mondot S."/>
            <person name="Nicolas P."/>
            <person name="Bossy R."/>
            <person name="Caron C."/>
            <person name="Bessieres P."/>
            <person name="Gibrat J.-F."/>
            <person name="Claverol S."/>
            <person name="Dumetz F."/>
            <person name="Le Henaff M."/>
            <person name="Benmansour A."/>
        </authorList>
    </citation>
    <scope>NUCLEOTIDE SEQUENCE [LARGE SCALE GENOMIC DNA]</scope>
    <source>
        <strain>ATCC 49511 / DSM 21280 / CIP 103535 / JIP02/86</strain>
    </source>
</reference>
<accession>A6GZ95</accession>
<keyword id="KW-1185">Reference proteome</keyword>
<keyword id="KW-0687">Ribonucleoprotein</keyword>
<keyword id="KW-0689">Ribosomal protein</keyword>
<keyword id="KW-0694">RNA-binding</keyword>
<keyword id="KW-0699">rRNA-binding</keyword>
<organism>
    <name type="scientific">Flavobacterium psychrophilum (strain ATCC 49511 / DSM 21280 / CIP 103535 / JIP02/86)</name>
    <dbReference type="NCBI Taxonomy" id="402612"/>
    <lineage>
        <taxon>Bacteria</taxon>
        <taxon>Pseudomonadati</taxon>
        <taxon>Bacteroidota</taxon>
        <taxon>Flavobacteriia</taxon>
        <taxon>Flavobacteriales</taxon>
        <taxon>Flavobacteriaceae</taxon>
        <taxon>Flavobacterium</taxon>
    </lineage>
</organism>
<feature type="chain" id="PRO_1000051048" description="Small ribosomal subunit protein uS19">
    <location>
        <begin position="1"/>
        <end position="92"/>
    </location>
</feature>
<feature type="region of interest" description="Disordered" evidence="2">
    <location>
        <begin position="73"/>
        <end position="92"/>
    </location>
</feature>
<feature type="compositionally biased region" description="Basic residues" evidence="2">
    <location>
        <begin position="80"/>
        <end position="92"/>
    </location>
</feature>
<dbReference type="EMBL" id="AM398681">
    <property type="protein sequence ID" value="CAL43418.1"/>
    <property type="molecule type" value="Genomic_DNA"/>
</dbReference>
<dbReference type="RefSeq" id="WP_007136562.1">
    <property type="nucleotide sequence ID" value="NC_009613.3"/>
</dbReference>
<dbReference type="RefSeq" id="YP_001296229.1">
    <property type="nucleotide sequence ID" value="NC_009613.3"/>
</dbReference>
<dbReference type="SMR" id="A6GZ95"/>
<dbReference type="STRING" id="402612.FP1335"/>
<dbReference type="EnsemblBacteria" id="CAL43418">
    <property type="protein sequence ID" value="CAL43418"/>
    <property type="gene ID" value="FP1335"/>
</dbReference>
<dbReference type="GeneID" id="66553238"/>
<dbReference type="KEGG" id="fps:FP1335"/>
<dbReference type="PATRIC" id="fig|402612.5.peg.1352"/>
<dbReference type="eggNOG" id="COG0185">
    <property type="taxonomic scope" value="Bacteria"/>
</dbReference>
<dbReference type="HOGENOM" id="CLU_144911_0_1_10"/>
<dbReference type="OrthoDB" id="9797833at2"/>
<dbReference type="Proteomes" id="UP000006394">
    <property type="component" value="Chromosome"/>
</dbReference>
<dbReference type="GO" id="GO:0005737">
    <property type="term" value="C:cytoplasm"/>
    <property type="evidence" value="ECO:0007669"/>
    <property type="project" value="UniProtKB-ARBA"/>
</dbReference>
<dbReference type="GO" id="GO:0015935">
    <property type="term" value="C:small ribosomal subunit"/>
    <property type="evidence" value="ECO:0007669"/>
    <property type="project" value="InterPro"/>
</dbReference>
<dbReference type="GO" id="GO:0019843">
    <property type="term" value="F:rRNA binding"/>
    <property type="evidence" value="ECO:0007669"/>
    <property type="project" value="UniProtKB-UniRule"/>
</dbReference>
<dbReference type="GO" id="GO:0003735">
    <property type="term" value="F:structural constituent of ribosome"/>
    <property type="evidence" value="ECO:0007669"/>
    <property type="project" value="InterPro"/>
</dbReference>
<dbReference type="GO" id="GO:0000028">
    <property type="term" value="P:ribosomal small subunit assembly"/>
    <property type="evidence" value="ECO:0007669"/>
    <property type="project" value="TreeGrafter"/>
</dbReference>
<dbReference type="GO" id="GO:0006412">
    <property type="term" value="P:translation"/>
    <property type="evidence" value="ECO:0007669"/>
    <property type="project" value="UniProtKB-UniRule"/>
</dbReference>
<dbReference type="FunFam" id="3.30.860.10:FF:000001">
    <property type="entry name" value="30S ribosomal protein S19"/>
    <property type="match status" value="1"/>
</dbReference>
<dbReference type="Gene3D" id="3.30.860.10">
    <property type="entry name" value="30s Ribosomal Protein S19, Chain A"/>
    <property type="match status" value="1"/>
</dbReference>
<dbReference type="HAMAP" id="MF_00531">
    <property type="entry name" value="Ribosomal_uS19"/>
    <property type="match status" value="1"/>
</dbReference>
<dbReference type="InterPro" id="IPR002222">
    <property type="entry name" value="Ribosomal_uS19"/>
</dbReference>
<dbReference type="InterPro" id="IPR005732">
    <property type="entry name" value="Ribosomal_uS19_bac-type"/>
</dbReference>
<dbReference type="InterPro" id="IPR020934">
    <property type="entry name" value="Ribosomal_uS19_CS"/>
</dbReference>
<dbReference type="InterPro" id="IPR023575">
    <property type="entry name" value="Ribosomal_uS19_SF"/>
</dbReference>
<dbReference type="NCBIfam" id="TIGR01050">
    <property type="entry name" value="rpsS_bact"/>
    <property type="match status" value="1"/>
</dbReference>
<dbReference type="PANTHER" id="PTHR11880">
    <property type="entry name" value="RIBOSOMAL PROTEIN S19P FAMILY MEMBER"/>
    <property type="match status" value="1"/>
</dbReference>
<dbReference type="PANTHER" id="PTHR11880:SF8">
    <property type="entry name" value="SMALL RIBOSOMAL SUBUNIT PROTEIN US19M"/>
    <property type="match status" value="1"/>
</dbReference>
<dbReference type="Pfam" id="PF00203">
    <property type="entry name" value="Ribosomal_S19"/>
    <property type="match status" value="1"/>
</dbReference>
<dbReference type="PIRSF" id="PIRSF002144">
    <property type="entry name" value="Ribosomal_S19"/>
    <property type="match status" value="1"/>
</dbReference>
<dbReference type="PRINTS" id="PR00975">
    <property type="entry name" value="RIBOSOMALS19"/>
</dbReference>
<dbReference type="SUPFAM" id="SSF54570">
    <property type="entry name" value="Ribosomal protein S19"/>
    <property type="match status" value="1"/>
</dbReference>
<dbReference type="PROSITE" id="PS00323">
    <property type="entry name" value="RIBOSOMAL_S19"/>
    <property type="match status" value="1"/>
</dbReference>
<comment type="function">
    <text evidence="1">Protein S19 forms a complex with S13 that binds strongly to the 16S ribosomal RNA.</text>
</comment>
<comment type="similarity">
    <text evidence="1">Belongs to the universal ribosomal protein uS19 family.</text>
</comment>
<sequence>MARSLKKGPFVHYKLDKKVQENIAGGNKGVVKTWSRASMITPDFVGQTIAVHNGRQFVPVYVTENMVGHKLGEFSPTRSFRGHAGAKNKGKK</sequence>
<gene>
    <name evidence="1" type="primary">rpsS</name>
    <name type="ordered locus">FP1335</name>
</gene>
<name>RS19_FLAPJ</name>
<protein>
    <recommendedName>
        <fullName evidence="1">Small ribosomal subunit protein uS19</fullName>
    </recommendedName>
    <alternativeName>
        <fullName evidence="3">30S ribosomal protein S19</fullName>
    </alternativeName>
</protein>